<dbReference type="EMBL" id="CP000462">
    <property type="protein sequence ID" value="ABK38958.1"/>
    <property type="molecule type" value="Genomic_DNA"/>
</dbReference>
<dbReference type="RefSeq" id="WP_011707244.1">
    <property type="nucleotide sequence ID" value="NC_008570.1"/>
</dbReference>
<dbReference type="RefSeq" id="YP_857969.1">
    <property type="nucleotide sequence ID" value="NC_008570.1"/>
</dbReference>
<dbReference type="STRING" id="380703.AHA_3495"/>
<dbReference type="EnsemblBacteria" id="ABK38958">
    <property type="protein sequence ID" value="ABK38958"/>
    <property type="gene ID" value="AHA_3495"/>
</dbReference>
<dbReference type="GeneID" id="4490425"/>
<dbReference type="KEGG" id="aha:AHA_3495"/>
<dbReference type="PATRIC" id="fig|380703.7.peg.3483"/>
<dbReference type="eggNOG" id="COG2917">
    <property type="taxonomic scope" value="Bacteria"/>
</dbReference>
<dbReference type="HOGENOM" id="CLU_089554_2_0_6"/>
<dbReference type="OrthoDB" id="9788219at2"/>
<dbReference type="Proteomes" id="UP000000756">
    <property type="component" value="Chromosome"/>
</dbReference>
<dbReference type="GO" id="GO:0005886">
    <property type="term" value="C:plasma membrane"/>
    <property type="evidence" value="ECO:0007669"/>
    <property type="project" value="UniProtKB-SubCell"/>
</dbReference>
<dbReference type="HAMAP" id="MF_00189">
    <property type="entry name" value="YciB"/>
    <property type="match status" value="1"/>
</dbReference>
<dbReference type="InterPro" id="IPR006008">
    <property type="entry name" value="YciB"/>
</dbReference>
<dbReference type="NCBIfam" id="TIGR00997">
    <property type="entry name" value="ispZ"/>
    <property type="match status" value="1"/>
</dbReference>
<dbReference type="NCBIfam" id="NF001324">
    <property type="entry name" value="PRK00259.1-2"/>
    <property type="match status" value="1"/>
</dbReference>
<dbReference type="NCBIfam" id="NF001325">
    <property type="entry name" value="PRK00259.1-3"/>
    <property type="match status" value="1"/>
</dbReference>
<dbReference type="NCBIfam" id="NF001326">
    <property type="entry name" value="PRK00259.1-4"/>
    <property type="match status" value="1"/>
</dbReference>
<dbReference type="PANTHER" id="PTHR36917:SF1">
    <property type="entry name" value="INNER MEMBRANE-SPANNING PROTEIN YCIB"/>
    <property type="match status" value="1"/>
</dbReference>
<dbReference type="PANTHER" id="PTHR36917">
    <property type="entry name" value="INTRACELLULAR SEPTATION PROTEIN A-RELATED"/>
    <property type="match status" value="1"/>
</dbReference>
<dbReference type="Pfam" id="PF04279">
    <property type="entry name" value="IspA"/>
    <property type="match status" value="1"/>
</dbReference>
<proteinExistence type="inferred from homology"/>
<protein>
    <recommendedName>
        <fullName evidence="1">Inner membrane-spanning protein YciB</fullName>
    </recommendedName>
</protein>
<organism>
    <name type="scientific">Aeromonas hydrophila subsp. hydrophila (strain ATCC 7966 / DSM 30187 / BCRC 13018 / CCUG 14551 / JCM 1027 / KCTC 2358 / NCIMB 9240 / NCTC 8049)</name>
    <dbReference type="NCBI Taxonomy" id="380703"/>
    <lineage>
        <taxon>Bacteria</taxon>
        <taxon>Pseudomonadati</taxon>
        <taxon>Pseudomonadota</taxon>
        <taxon>Gammaproteobacteria</taxon>
        <taxon>Aeromonadales</taxon>
        <taxon>Aeromonadaceae</taxon>
        <taxon>Aeromonas</taxon>
    </lineage>
</organism>
<feature type="chain" id="PRO_1000020980" description="Inner membrane-spanning protein YciB">
    <location>
        <begin position="1"/>
        <end position="183"/>
    </location>
</feature>
<feature type="transmembrane region" description="Helical" evidence="1">
    <location>
        <begin position="4"/>
        <end position="24"/>
    </location>
</feature>
<feature type="transmembrane region" description="Helical" evidence="1">
    <location>
        <begin position="50"/>
        <end position="70"/>
    </location>
</feature>
<feature type="transmembrane region" description="Helical" evidence="1">
    <location>
        <begin position="72"/>
        <end position="92"/>
    </location>
</feature>
<feature type="transmembrane region" description="Helical" evidence="1">
    <location>
        <begin position="119"/>
        <end position="139"/>
    </location>
</feature>
<feature type="transmembrane region" description="Helical" evidence="1">
    <location>
        <begin position="149"/>
        <end position="169"/>
    </location>
</feature>
<comment type="function">
    <text evidence="1">Plays a role in cell envelope biogenesis, maintenance of cell envelope integrity and membrane homeostasis.</text>
</comment>
<comment type="subcellular location">
    <subcellularLocation>
        <location evidence="1">Cell inner membrane</location>
        <topology evidence="1">Multi-pass membrane protein</topology>
    </subcellularLocation>
</comment>
<comment type="similarity">
    <text evidence="1">Belongs to the YciB family.</text>
</comment>
<sequence>MKQFIEFIPLIVFFAVYKFYDIYMATGALVVVTGLQLAYSWIRYRKVEKMQLFTFLLVGFFGGLTVFFHDDTFIKWKVTVINVLFALGLLISRYGFGKNLIKQMLGKELQAPDPVWDRVNLGWAGFFTVCGLLNLYVAFNLPQEMWVNFKVFGLLGMTLVFTLLSGVYLYRHLPAEQKNEMKK</sequence>
<evidence type="ECO:0000255" key="1">
    <source>
        <dbReference type="HAMAP-Rule" id="MF_00189"/>
    </source>
</evidence>
<name>YCIB_AERHH</name>
<accession>A0KNW8</accession>
<gene>
    <name evidence="1" type="primary">yciB</name>
    <name type="ordered locus">AHA_3495</name>
</gene>
<keyword id="KW-0997">Cell inner membrane</keyword>
<keyword id="KW-1003">Cell membrane</keyword>
<keyword id="KW-0472">Membrane</keyword>
<keyword id="KW-1185">Reference proteome</keyword>
<keyword id="KW-0812">Transmembrane</keyword>
<keyword id="KW-1133">Transmembrane helix</keyword>
<reference key="1">
    <citation type="journal article" date="2006" name="J. Bacteriol.">
        <title>Genome sequence of Aeromonas hydrophila ATCC 7966T: jack of all trades.</title>
        <authorList>
            <person name="Seshadri R."/>
            <person name="Joseph S.W."/>
            <person name="Chopra A.K."/>
            <person name="Sha J."/>
            <person name="Shaw J."/>
            <person name="Graf J."/>
            <person name="Haft D.H."/>
            <person name="Wu M."/>
            <person name="Ren Q."/>
            <person name="Rosovitz M.J."/>
            <person name="Madupu R."/>
            <person name="Tallon L."/>
            <person name="Kim M."/>
            <person name="Jin S."/>
            <person name="Vuong H."/>
            <person name="Stine O.C."/>
            <person name="Ali A."/>
            <person name="Horneman A.J."/>
            <person name="Heidelberg J.F."/>
        </authorList>
    </citation>
    <scope>NUCLEOTIDE SEQUENCE [LARGE SCALE GENOMIC DNA]</scope>
    <source>
        <strain>ATCC 7966 / DSM 30187 / BCRC 13018 / CCUG 14551 / JCM 1027 / KCTC 2358 / NCIMB 9240 / NCTC 8049</strain>
    </source>
</reference>